<comment type="subcellular location">
    <subcellularLocation>
        <location evidence="1">Secreted</location>
        <location evidence="1">Cell wall</location>
    </subcellularLocation>
</comment>
<dbReference type="InParanoid" id="P80814"/>
<dbReference type="Proteomes" id="UP000004994">
    <property type="component" value="Unplaced"/>
</dbReference>
<dbReference type="GO" id="GO:0005576">
    <property type="term" value="C:extracellular region"/>
    <property type="evidence" value="ECO:0007669"/>
    <property type="project" value="UniProtKB-KW"/>
</dbReference>
<keyword id="KW-0134">Cell wall</keyword>
<keyword id="KW-0903">Direct protein sequencing</keyword>
<keyword id="KW-1185">Reference proteome</keyword>
<keyword id="KW-0964">Secreted</keyword>
<feature type="chain" id="PRO_0000079684" description="80 kDa cell wall protein">
    <location>
        <begin position="1"/>
        <end position="10" status="greater than"/>
    </location>
</feature>
<feature type="non-terminal residue" evidence="2">
    <location>
        <position position="10"/>
    </location>
</feature>
<protein>
    <recommendedName>
        <fullName>80 kDa cell wall protein</fullName>
    </recommendedName>
</protein>
<evidence type="ECO:0000269" key="1">
    <source>
    </source>
</evidence>
<evidence type="ECO:0000303" key="2">
    <source>
    </source>
</evidence>
<evidence type="ECO:0000305" key="3"/>
<name>CWP18_SOLLC</name>
<accession>P80814</accession>
<reference evidence="3" key="1">
    <citation type="journal article" date="1997" name="J. Biol. Chem.">
        <title>Differential extraction and protein sequencing reveals major differences in patterns of primary cell wall proteins from plants.</title>
        <authorList>
            <person name="Robertson D."/>
            <person name="Mitchell G.P."/>
            <person name="Gilroy J.S."/>
            <person name="Gerrish C."/>
            <person name="Bolwell G.P."/>
            <person name="Slabas A.R."/>
        </authorList>
    </citation>
    <scope>PROTEIN SEQUENCE</scope>
    <scope>SUBCELLULAR LOCATION</scope>
</reference>
<organism>
    <name type="scientific">Solanum lycopersicum</name>
    <name type="common">Tomato</name>
    <name type="synonym">Lycopersicon esculentum</name>
    <dbReference type="NCBI Taxonomy" id="4081"/>
    <lineage>
        <taxon>Eukaryota</taxon>
        <taxon>Viridiplantae</taxon>
        <taxon>Streptophyta</taxon>
        <taxon>Embryophyta</taxon>
        <taxon>Tracheophyta</taxon>
        <taxon>Spermatophyta</taxon>
        <taxon>Magnoliopsida</taxon>
        <taxon>eudicotyledons</taxon>
        <taxon>Gunneridae</taxon>
        <taxon>Pentapetalae</taxon>
        <taxon>asterids</taxon>
        <taxon>lamiids</taxon>
        <taxon>Solanales</taxon>
        <taxon>Solanaceae</taxon>
        <taxon>Solanoideae</taxon>
        <taxon>Solaneae</taxon>
        <taxon>Solanum</taxon>
        <taxon>Solanum subgen. Lycopersicon</taxon>
    </lineage>
</organism>
<sequence length="10" mass="1148">STHTSDFLKL</sequence>
<proteinExistence type="evidence at protein level"/>